<reference key="1">
    <citation type="journal article" date="2002" name="Proc. Natl. Acad. Sci. U.S.A.">
        <title>Genome sequence and comparative microarray analysis of serotype M18 group A Streptococcus strains associated with acute rheumatic fever outbreaks.</title>
        <authorList>
            <person name="Smoot J.C."/>
            <person name="Barbian K.D."/>
            <person name="Van Gompel J.J."/>
            <person name="Smoot L.M."/>
            <person name="Chaussee M.S."/>
            <person name="Sylva G.L."/>
            <person name="Sturdevant D.E."/>
            <person name="Ricklefs S.M."/>
            <person name="Porcella S.F."/>
            <person name="Parkins L.D."/>
            <person name="Beres S.B."/>
            <person name="Campbell D.S."/>
            <person name="Smith T.M."/>
            <person name="Zhang Q."/>
            <person name="Kapur V."/>
            <person name="Daly J.A."/>
            <person name="Veasy L.G."/>
            <person name="Musser J.M."/>
        </authorList>
    </citation>
    <scope>NUCLEOTIDE SEQUENCE [LARGE SCALE GENOMIC DNA]</scope>
    <source>
        <strain>MGAS8232</strain>
    </source>
</reference>
<gene>
    <name evidence="1" type="primary">rplW</name>
    <name type="ordered locus">spyM18_0052</name>
</gene>
<keyword id="KW-0687">Ribonucleoprotein</keyword>
<keyword id="KW-0689">Ribosomal protein</keyword>
<keyword id="KW-0694">RNA-binding</keyword>
<keyword id="KW-0699">rRNA-binding</keyword>
<protein>
    <recommendedName>
        <fullName evidence="1">Large ribosomal subunit protein uL23</fullName>
    </recommendedName>
    <alternativeName>
        <fullName evidence="2">50S ribosomal protein L23</fullName>
    </alternativeName>
</protein>
<organism>
    <name type="scientific">Streptococcus pyogenes serotype M18 (strain MGAS8232)</name>
    <dbReference type="NCBI Taxonomy" id="186103"/>
    <lineage>
        <taxon>Bacteria</taxon>
        <taxon>Bacillati</taxon>
        <taxon>Bacillota</taxon>
        <taxon>Bacilli</taxon>
        <taxon>Lactobacillales</taxon>
        <taxon>Streptococcaceae</taxon>
        <taxon>Streptococcus</taxon>
    </lineage>
</organism>
<evidence type="ECO:0000255" key="1">
    <source>
        <dbReference type="HAMAP-Rule" id="MF_01369"/>
    </source>
</evidence>
<evidence type="ECO:0000305" key="2"/>
<dbReference type="EMBL" id="AE009949">
    <property type="protein sequence ID" value="AAL96878.1"/>
    <property type="molecule type" value="Genomic_DNA"/>
</dbReference>
<dbReference type="RefSeq" id="WP_002986656.1">
    <property type="nucleotide sequence ID" value="NC_003485.1"/>
</dbReference>
<dbReference type="SMR" id="Q7CNQ1"/>
<dbReference type="KEGG" id="spm:spyM18_0052"/>
<dbReference type="HOGENOM" id="CLU_037562_3_2_9"/>
<dbReference type="GO" id="GO:1990904">
    <property type="term" value="C:ribonucleoprotein complex"/>
    <property type="evidence" value="ECO:0007669"/>
    <property type="project" value="UniProtKB-KW"/>
</dbReference>
<dbReference type="GO" id="GO:0005840">
    <property type="term" value="C:ribosome"/>
    <property type="evidence" value="ECO:0007669"/>
    <property type="project" value="UniProtKB-KW"/>
</dbReference>
<dbReference type="GO" id="GO:0019843">
    <property type="term" value="F:rRNA binding"/>
    <property type="evidence" value="ECO:0007669"/>
    <property type="project" value="UniProtKB-UniRule"/>
</dbReference>
<dbReference type="GO" id="GO:0003735">
    <property type="term" value="F:structural constituent of ribosome"/>
    <property type="evidence" value="ECO:0007669"/>
    <property type="project" value="InterPro"/>
</dbReference>
<dbReference type="GO" id="GO:0006412">
    <property type="term" value="P:translation"/>
    <property type="evidence" value="ECO:0007669"/>
    <property type="project" value="UniProtKB-UniRule"/>
</dbReference>
<dbReference type="FunFam" id="3.30.70.330:FF:000001">
    <property type="entry name" value="50S ribosomal protein L23"/>
    <property type="match status" value="1"/>
</dbReference>
<dbReference type="Gene3D" id="3.30.70.330">
    <property type="match status" value="1"/>
</dbReference>
<dbReference type="HAMAP" id="MF_01369_B">
    <property type="entry name" value="Ribosomal_uL23_B"/>
    <property type="match status" value="1"/>
</dbReference>
<dbReference type="InterPro" id="IPR012677">
    <property type="entry name" value="Nucleotide-bd_a/b_plait_sf"/>
</dbReference>
<dbReference type="InterPro" id="IPR013025">
    <property type="entry name" value="Ribosomal_uL23-like"/>
</dbReference>
<dbReference type="InterPro" id="IPR012678">
    <property type="entry name" value="Ribosomal_uL23/eL15/eS24_sf"/>
</dbReference>
<dbReference type="InterPro" id="IPR001014">
    <property type="entry name" value="Ribosomal_uL23_CS"/>
</dbReference>
<dbReference type="NCBIfam" id="NF004361">
    <property type="entry name" value="PRK05738.2-1"/>
    <property type="match status" value="1"/>
</dbReference>
<dbReference type="NCBIfam" id="NF004363">
    <property type="entry name" value="PRK05738.2-4"/>
    <property type="match status" value="1"/>
</dbReference>
<dbReference type="PANTHER" id="PTHR11620">
    <property type="entry name" value="60S RIBOSOMAL PROTEIN L23A"/>
    <property type="match status" value="1"/>
</dbReference>
<dbReference type="Pfam" id="PF00276">
    <property type="entry name" value="Ribosomal_L23"/>
    <property type="match status" value="1"/>
</dbReference>
<dbReference type="SUPFAM" id="SSF54189">
    <property type="entry name" value="Ribosomal proteins S24e, L23 and L15e"/>
    <property type="match status" value="1"/>
</dbReference>
<dbReference type="PROSITE" id="PS00050">
    <property type="entry name" value="RIBOSOMAL_L23"/>
    <property type="match status" value="1"/>
</dbReference>
<feature type="chain" id="PRO_1000068165" description="Large ribosomal subunit protein uL23">
    <location>
        <begin position="1"/>
        <end position="98"/>
    </location>
</feature>
<sequence>MNLYDVIKKPVITEKSMIALEAGKYTFEVDTRAHKLLIKQAVEAAFDGVKVASVNTVNVKPKAKRVGRYTGFTSKTKKAIITLTADSKAIELFAAEAE</sequence>
<comment type="function">
    <text evidence="1">One of the early assembly proteins it binds 23S rRNA. One of the proteins that surrounds the polypeptide exit tunnel on the outside of the ribosome. Forms the main docking site for trigger factor binding to the ribosome.</text>
</comment>
<comment type="subunit">
    <text evidence="1">Part of the 50S ribosomal subunit. Contacts protein L29, and trigger factor when it is bound to the ribosome.</text>
</comment>
<comment type="similarity">
    <text evidence="1">Belongs to the universal ribosomal protein uL23 family.</text>
</comment>
<accession>Q7CNQ1</accession>
<proteinExistence type="inferred from homology"/>
<name>RL23_STRP8</name>